<sequence length="268" mass="30833">MAKVPDLFEDLKNCYSENEDYSSEIDHLSLNQKSFYDASYEPLREDQMNKFMSLDTSETSKTSKLSFKENVVMVAASGKILKKRRLSLNQFITDDDLEAIANNTEEEIIKPRSAHYSFQSNVKYNFMRVIHQECILNDALNQSIIRDMSGPYLTATTLNNLEEAVKFDMVAYVSEEDSQLPVTLRISKTQLFVSAQNEDEPVLLKEMPETPKIIKDETNLLFFWEKHGSMDYFKSVAHPKLFIATKQEKLVHMASGPPSITDFQILEK</sequence>
<evidence type="ECO:0000250" key="1">
    <source>
        <dbReference type="UniProtKB" id="P01582"/>
    </source>
</evidence>
<evidence type="ECO:0000250" key="2">
    <source>
        <dbReference type="UniProtKB" id="P01583"/>
    </source>
</evidence>
<evidence type="ECO:0000255" key="3"/>
<evidence type="ECO:0000305" key="4"/>
<comment type="function">
    <text evidence="2">Cytokine constitutively present intracellularly in nearly all resting non-hematopoietic cells that plays an important role in inflammation and bridges the innate and adaptive immune systems. After binding to its receptor IL1R1 together with its accessory protein IL1RAP, forms the high affinity interleukin-1 receptor complex. Signaling involves the recruitment of adapter molecules such as MYD88, IRAK1 or IRAK4. In turn, mediates the activation of NF-kappa-B and the three MAPK pathways p38, p42/p44 and JNK pathways. Within the cell, acts as an alarmin and cell death results in its liberation in the extracellular space after disruption of the cell membrane to induce inflammation and alert the host to injury or damage. In addition to its role as a danger signal, which occurs when the cytokine is passively released by cell necrosis, directly senses DNA damage and acts as signal for genotoxic stress without loss of cell integrity.</text>
</comment>
<comment type="subunit">
    <text evidence="2">Monomer. Interacts with TMED10; the interaction mediates the translocation from the cytoplasm into the ERGIC (endoplasmic reticulum-Golgi intermediate compartment) and thereby secretion. Interacts with IL1R1. Interacts with S100A13; this interaction is the first step in the export of IL1A, followed by direct translocation of this complex across the plasma membrane.</text>
</comment>
<comment type="subcellular location">
    <subcellularLocation>
        <location evidence="2">Nucleus</location>
    </subcellularLocation>
    <subcellularLocation>
        <location evidence="2">Cytoplasm</location>
    </subcellularLocation>
    <subcellularLocation>
        <location evidence="2">Secreted</location>
    </subcellularLocation>
    <text evidence="2">The lack of a specific hydrophobic segment in the precursor sequence suggests that IL-1 is released by damaged cells or is secreted by a mechanism differing from that used for other secretory proteins. The secretion is dependent on protein unfolding and facilitated by the cargo receptor TMED10; it results in protein translocation from the cytoplasm into the ERGIC (endoplasmic reticulum-Golgi intermediate compartment) followed by vesicle entry and secretion. Recruited to DNA damage sites and secreted after genotoxic stress.</text>
</comment>
<comment type="domain">
    <text>The similarity among the IL-1 precursors suggests that the amino ends of these proteins serve some as yet undefined function.</text>
</comment>
<comment type="PTM">
    <text evidence="2">Acetylated within its nuclear localization sequence, which impacts subcellular localization.</text>
</comment>
<comment type="PTM">
    <text evidence="2">Proteolytic processed by CAPN1 in a calcium-dependent manner. Cleavage from 31 kDa precursor to 18 kDa biologically active molecules.</text>
</comment>
<comment type="PTM">
    <text evidence="2">Phosphorylated. Phosphorylation greatly enhances susceptibility to digestion and promotes the conversion of pre-IL1A alpha to the biologically active IL1A.</text>
</comment>
<comment type="similarity">
    <text evidence="4">Belongs to the IL-1 family.</text>
</comment>
<gene>
    <name type="primary">IL1A</name>
</gene>
<name>IL1A_BOVIN</name>
<dbReference type="EMBL" id="M36182">
    <property type="protein sequence ID" value="AAA30590.1"/>
    <property type="molecule type" value="mRNA"/>
</dbReference>
<dbReference type="EMBL" id="X12497">
    <property type="protein sequence ID" value="CAA31017.1"/>
    <property type="molecule type" value="mRNA"/>
</dbReference>
<dbReference type="EMBL" id="M37210">
    <property type="protein sequence ID" value="AAA30583.1"/>
    <property type="molecule type" value="mRNA"/>
</dbReference>
<dbReference type="PIR" id="JL0009">
    <property type="entry name" value="ICBO1A"/>
</dbReference>
<dbReference type="RefSeq" id="NP_776517.1">
    <property type="nucleotide sequence ID" value="NM_174092.1"/>
</dbReference>
<dbReference type="SMR" id="P08831"/>
<dbReference type="FunCoup" id="P08831">
    <property type="interactions" value="332"/>
</dbReference>
<dbReference type="STRING" id="9913.ENSBTAP00000013665"/>
<dbReference type="GlyCosmos" id="P08831">
    <property type="glycosylation" value="2 sites, No reported glycans"/>
</dbReference>
<dbReference type="GlyGen" id="P08831">
    <property type="glycosylation" value="2 sites"/>
</dbReference>
<dbReference type="PaxDb" id="9913-ENSBTAP00000013665"/>
<dbReference type="GeneID" id="281250"/>
<dbReference type="KEGG" id="bta:281250"/>
<dbReference type="CTD" id="3552"/>
<dbReference type="VEuPathDB" id="HostDB:ENSBTAG00000010349"/>
<dbReference type="eggNOG" id="ENOG502T3DD">
    <property type="taxonomic scope" value="Eukaryota"/>
</dbReference>
<dbReference type="HOGENOM" id="CLU_090014_0_0_1"/>
<dbReference type="InParanoid" id="P08831"/>
<dbReference type="OMA" id="SNMKYNF"/>
<dbReference type="OrthoDB" id="9451248at2759"/>
<dbReference type="TreeFam" id="TF300203"/>
<dbReference type="Reactome" id="R-BTA-448706">
    <property type="pathway name" value="Interleukin-1 processing"/>
</dbReference>
<dbReference type="Reactome" id="R-BTA-5620971">
    <property type="pathway name" value="Pyroptosis"/>
</dbReference>
<dbReference type="Reactome" id="R-BTA-9020702">
    <property type="pathway name" value="Interleukin-1 signaling"/>
</dbReference>
<dbReference type="Proteomes" id="UP000009136">
    <property type="component" value="Chromosome 11"/>
</dbReference>
<dbReference type="Bgee" id="ENSBTAG00000010349">
    <property type="expression patterns" value="Expressed in milk and 52 other cell types or tissues"/>
</dbReference>
<dbReference type="GO" id="GO:0005829">
    <property type="term" value="C:cytosol"/>
    <property type="evidence" value="ECO:0000250"/>
    <property type="project" value="UniProtKB"/>
</dbReference>
<dbReference type="GO" id="GO:0005615">
    <property type="term" value="C:extracellular space"/>
    <property type="evidence" value="ECO:0000250"/>
    <property type="project" value="UniProtKB"/>
</dbReference>
<dbReference type="GO" id="GO:0005634">
    <property type="term" value="C:nucleus"/>
    <property type="evidence" value="ECO:0007669"/>
    <property type="project" value="UniProtKB-SubCell"/>
</dbReference>
<dbReference type="GO" id="GO:0005507">
    <property type="term" value="F:copper ion binding"/>
    <property type="evidence" value="ECO:0000250"/>
    <property type="project" value="UniProtKB"/>
</dbReference>
<dbReference type="GO" id="GO:0005125">
    <property type="term" value="F:cytokine activity"/>
    <property type="evidence" value="ECO:0000318"/>
    <property type="project" value="GO_Central"/>
</dbReference>
<dbReference type="GO" id="GO:0005149">
    <property type="term" value="F:interleukin-1 receptor binding"/>
    <property type="evidence" value="ECO:0007669"/>
    <property type="project" value="InterPro"/>
</dbReference>
<dbReference type="GO" id="GO:0034605">
    <property type="term" value="P:cellular response to heat"/>
    <property type="evidence" value="ECO:0000250"/>
    <property type="project" value="UniProtKB"/>
</dbReference>
<dbReference type="GO" id="GO:0071222">
    <property type="term" value="P:cellular response to lipopolysaccharide"/>
    <property type="evidence" value="ECO:0000318"/>
    <property type="project" value="GO_Central"/>
</dbReference>
<dbReference type="GO" id="GO:0019221">
    <property type="term" value="P:cytokine-mediated signaling pathway"/>
    <property type="evidence" value="ECO:0000318"/>
    <property type="project" value="GO_Central"/>
</dbReference>
<dbReference type="GO" id="GO:0001660">
    <property type="term" value="P:fever generation"/>
    <property type="evidence" value="ECO:0007669"/>
    <property type="project" value="UniProtKB-KW"/>
</dbReference>
<dbReference type="GO" id="GO:0006955">
    <property type="term" value="P:immune response"/>
    <property type="evidence" value="ECO:0000318"/>
    <property type="project" value="GO_Central"/>
</dbReference>
<dbReference type="GO" id="GO:0006954">
    <property type="term" value="P:inflammatory response"/>
    <property type="evidence" value="ECO:0000318"/>
    <property type="project" value="GO_Central"/>
</dbReference>
<dbReference type="GO" id="GO:0043123">
    <property type="term" value="P:positive regulation of canonical NF-kappaB signal transduction"/>
    <property type="evidence" value="ECO:0000318"/>
    <property type="project" value="GO_Central"/>
</dbReference>
<dbReference type="GO" id="GO:0051781">
    <property type="term" value="P:positive regulation of cell division"/>
    <property type="evidence" value="ECO:0007669"/>
    <property type="project" value="UniProtKB-KW"/>
</dbReference>
<dbReference type="GO" id="GO:0033092">
    <property type="term" value="P:positive regulation of immature T cell proliferation in thymus"/>
    <property type="evidence" value="ECO:0000318"/>
    <property type="project" value="GO_Central"/>
</dbReference>
<dbReference type="GO" id="GO:0070372">
    <property type="term" value="P:regulation of ERK1 and ERK2 cascade"/>
    <property type="evidence" value="ECO:0000318"/>
    <property type="project" value="GO_Central"/>
</dbReference>
<dbReference type="GO" id="GO:0046688">
    <property type="term" value="P:response to copper ion"/>
    <property type="evidence" value="ECO:0000250"/>
    <property type="project" value="UniProtKB"/>
</dbReference>
<dbReference type="CDD" id="cd23295">
    <property type="entry name" value="beta-trefoil_IL1A"/>
    <property type="match status" value="1"/>
</dbReference>
<dbReference type="FunFam" id="2.80.10.50:FF:000049">
    <property type="entry name" value="Interleukin-1 alpha"/>
    <property type="match status" value="1"/>
</dbReference>
<dbReference type="Gene3D" id="2.80.10.50">
    <property type="match status" value="1"/>
</dbReference>
<dbReference type="InterPro" id="IPR003295">
    <property type="entry name" value="IL-1_alpha"/>
</dbReference>
<dbReference type="InterPro" id="IPR020877">
    <property type="entry name" value="IL-1_CS"/>
</dbReference>
<dbReference type="InterPro" id="IPR000975">
    <property type="entry name" value="IL-1_fam"/>
</dbReference>
<dbReference type="InterPro" id="IPR003502">
    <property type="entry name" value="IL-1_propep"/>
</dbReference>
<dbReference type="InterPro" id="IPR008996">
    <property type="entry name" value="IL1/FGF"/>
</dbReference>
<dbReference type="PANTHER" id="PTHR10078:SF33">
    <property type="entry name" value="INTERLEUKIN-1 ALPHA"/>
    <property type="match status" value="1"/>
</dbReference>
<dbReference type="PANTHER" id="PTHR10078">
    <property type="entry name" value="INTERLEUKIN-1 FAMILY MEMBER"/>
    <property type="match status" value="1"/>
</dbReference>
<dbReference type="Pfam" id="PF00340">
    <property type="entry name" value="IL1"/>
    <property type="match status" value="1"/>
</dbReference>
<dbReference type="Pfam" id="PF02394">
    <property type="entry name" value="IL1_propep"/>
    <property type="match status" value="1"/>
</dbReference>
<dbReference type="PRINTS" id="PR00264">
    <property type="entry name" value="INTERLEUKIN1"/>
</dbReference>
<dbReference type="PRINTS" id="PR01358">
    <property type="entry name" value="INTRLEUKIN1A"/>
</dbReference>
<dbReference type="PRINTS" id="PR01357">
    <property type="entry name" value="INTRLEUKN1AB"/>
</dbReference>
<dbReference type="SMART" id="SM00125">
    <property type="entry name" value="IL1"/>
    <property type="match status" value="1"/>
</dbReference>
<dbReference type="SUPFAM" id="SSF50353">
    <property type="entry name" value="Cytokine"/>
    <property type="match status" value="1"/>
</dbReference>
<dbReference type="PROSITE" id="PS00253">
    <property type="entry name" value="INTERLEUKIN_1"/>
    <property type="match status" value="1"/>
</dbReference>
<organism>
    <name type="scientific">Bos taurus</name>
    <name type="common">Bovine</name>
    <dbReference type="NCBI Taxonomy" id="9913"/>
    <lineage>
        <taxon>Eukaryota</taxon>
        <taxon>Metazoa</taxon>
        <taxon>Chordata</taxon>
        <taxon>Craniata</taxon>
        <taxon>Vertebrata</taxon>
        <taxon>Euteleostomi</taxon>
        <taxon>Mammalia</taxon>
        <taxon>Eutheria</taxon>
        <taxon>Laurasiatheria</taxon>
        <taxon>Artiodactyla</taxon>
        <taxon>Ruminantia</taxon>
        <taxon>Pecora</taxon>
        <taxon>Bovidae</taxon>
        <taxon>Bovinae</taxon>
        <taxon>Bos</taxon>
    </lineage>
</organism>
<protein>
    <recommendedName>
        <fullName>Interleukin-1 alpha</fullName>
        <shortName>IL-1 alpha</shortName>
    </recommendedName>
</protein>
<accession>P08831</accession>
<reference key="1">
    <citation type="journal article" date="1988" name="Nucleic Acids Res.">
        <title>The nucleotide sequence for the cDNA of bovine interleukin-1 alpha.</title>
        <authorList>
            <person name="Leong S.R."/>
            <person name="Flaggs G.M."/>
            <person name="Lawman M."/>
            <person name="Gray P.W."/>
        </authorList>
    </citation>
    <scope>NUCLEOTIDE SEQUENCE [MRNA]</scope>
</reference>
<reference key="2">
    <citation type="journal article" date="1988" name="Mol. Immunol.">
        <title>Cloning, sequence and expression of bovine interleukin 1 alpha and interleukin 1 beta complementary DNAs.</title>
        <authorList>
            <person name="Maliszewski C.R."/>
            <person name="Baker P.E."/>
            <person name="Schoenborn M.A."/>
            <person name="Davis B.S."/>
            <person name="Cosman D."/>
            <person name="Gillis S."/>
            <person name="Cerretti D.P."/>
        </authorList>
    </citation>
    <scope>NUCLEOTIDE SEQUENCE [MRNA]</scope>
</reference>
<feature type="propeptide" id="PRO_0000015251">
    <location>
        <begin position="1"/>
        <end position="112"/>
    </location>
</feature>
<feature type="chain" id="PRO_0000015252" description="Interleukin-1 alpha">
    <location>
        <begin position="113"/>
        <end position="268"/>
    </location>
</feature>
<feature type="region of interest" description="Nuclear localization signal (NLS)" evidence="2">
    <location>
        <begin position="82"/>
        <end position="86"/>
    </location>
</feature>
<feature type="modified residue" description="N6-acetyllysine" evidence="2">
    <location>
        <position position="82"/>
    </location>
</feature>
<feature type="modified residue" description="Phosphoserine" evidence="1">
    <location>
        <position position="87"/>
    </location>
</feature>
<feature type="glycosylation site" description="N-linked (GlcNAc...) asparagine" evidence="3">
    <location>
        <position position="102"/>
    </location>
</feature>
<feature type="glycosylation site" description="N-linked (GlcNAc...) asparagine" evidence="3">
    <location>
        <position position="141"/>
    </location>
</feature>
<proteinExistence type="evidence at transcript level"/>
<keyword id="KW-0007">Acetylation</keyword>
<keyword id="KW-0202">Cytokine</keyword>
<keyword id="KW-0963">Cytoplasm</keyword>
<keyword id="KW-0325">Glycoprotein</keyword>
<keyword id="KW-0395">Inflammatory response</keyword>
<keyword id="KW-0497">Mitogen</keyword>
<keyword id="KW-0539">Nucleus</keyword>
<keyword id="KW-0597">Phosphoprotein</keyword>
<keyword id="KW-0666">Pyrogen</keyword>
<keyword id="KW-1185">Reference proteome</keyword>
<keyword id="KW-0964">Secreted</keyword>